<name>ARLY_HYDCU</name>
<protein>
    <recommendedName>
        <fullName evidence="1">Argininosuccinate lyase</fullName>
        <shortName evidence="1">ASAL</shortName>
        <ecNumber evidence="1">4.3.2.1</ecNumber>
    </recommendedName>
    <alternativeName>
        <fullName evidence="1">Arginosuccinase</fullName>
    </alternativeName>
</protein>
<feature type="chain" id="PRO_0000240788" description="Argininosuccinate lyase">
    <location>
        <begin position="1"/>
        <end position="462"/>
    </location>
</feature>
<reference key="1">
    <citation type="journal article" date="2006" name="PLoS Biol.">
        <title>The genome of deep-sea vent chemolithoautotroph Thiomicrospira crunogena XCL-2.</title>
        <authorList>
            <person name="Scott K.M."/>
            <person name="Sievert S.M."/>
            <person name="Abril F.N."/>
            <person name="Ball L.A."/>
            <person name="Barrett C.J."/>
            <person name="Blake R.A."/>
            <person name="Boller A.J."/>
            <person name="Chain P.S.G."/>
            <person name="Clark J.A."/>
            <person name="Davis C.R."/>
            <person name="Detter C."/>
            <person name="Do K.F."/>
            <person name="Dobrinski K.P."/>
            <person name="Faza B.I."/>
            <person name="Fitzpatrick K.A."/>
            <person name="Freyermuth S.K."/>
            <person name="Harmer T.L."/>
            <person name="Hauser L.J."/>
            <person name="Huegler M."/>
            <person name="Kerfeld C.A."/>
            <person name="Klotz M.G."/>
            <person name="Kong W.W."/>
            <person name="Land M."/>
            <person name="Lapidus A."/>
            <person name="Larimer F.W."/>
            <person name="Longo D.L."/>
            <person name="Lucas S."/>
            <person name="Malfatti S.A."/>
            <person name="Massey S.E."/>
            <person name="Martin D.D."/>
            <person name="McCuddin Z."/>
            <person name="Meyer F."/>
            <person name="Moore J.L."/>
            <person name="Ocampo L.H. Jr."/>
            <person name="Paul J.H."/>
            <person name="Paulsen I.T."/>
            <person name="Reep D.K."/>
            <person name="Ren Q."/>
            <person name="Ross R.L."/>
            <person name="Sato P.Y."/>
            <person name="Thomas P."/>
            <person name="Tinkham L.E."/>
            <person name="Zeruth G.T."/>
        </authorList>
    </citation>
    <scope>NUCLEOTIDE SEQUENCE [LARGE SCALE GENOMIC DNA]</scope>
    <source>
        <strain>DSM 25203 / XCL-2</strain>
    </source>
</reference>
<comment type="catalytic activity">
    <reaction evidence="1">
        <text>2-(N(omega)-L-arginino)succinate = fumarate + L-arginine</text>
        <dbReference type="Rhea" id="RHEA:24020"/>
        <dbReference type="ChEBI" id="CHEBI:29806"/>
        <dbReference type="ChEBI" id="CHEBI:32682"/>
        <dbReference type="ChEBI" id="CHEBI:57472"/>
        <dbReference type="EC" id="4.3.2.1"/>
    </reaction>
</comment>
<comment type="pathway">
    <text evidence="1">Amino-acid biosynthesis; L-arginine biosynthesis; L-arginine from L-ornithine and carbamoyl phosphate: step 3/3.</text>
</comment>
<comment type="subcellular location">
    <subcellularLocation>
        <location evidence="1">Cytoplasm</location>
    </subcellularLocation>
</comment>
<comment type="similarity">
    <text evidence="1">Belongs to the lyase 1 family. Argininosuccinate lyase subfamily.</text>
</comment>
<proteinExistence type="inferred from homology"/>
<dbReference type="EC" id="4.3.2.1" evidence="1"/>
<dbReference type="EMBL" id="CP000109">
    <property type="protein sequence ID" value="ABB40706.1"/>
    <property type="molecule type" value="Genomic_DNA"/>
</dbReference>
<dbReference type="SMR" id="Q31JG7"/>
<dbReference type="STRING" id="317025.Tcr_0110"/>
<dbReference type="KEGG" id="tcx:Tcr_0110"/>
<dbReference type="eggNOG" id="COG0165">
    <property type="taxonomic scope" value="Bacteria"/>
</dbReference>
<dbReference type="HOGENOM" id="CLU_027272_2_3_6"/>
<dbReference type="OrthoDB" id="9769623at2"/>
<dbReference type="UniPathway" id="UPA00068">
    <property type="reaction ID" value="UER00114"/>
</dbReference>
<dbReference type="GO" id="GO:0005829">
    <property type="term" value="C:cytosol"/>
    <property type="evidence" value="ECO:0007669"/>
    <property type="project" value="TreeGrafter"/>
</dbReference>
<dbReference type="GO" id="GO:0004056">
    <property type="term" value="F:argininosuccinate lyase activity"/>
    <property type="evidence" value="ECO:0007669"/>
    <property type="project" value="UniProtKB-UniRule"/>
</dbReference>
<dbReference type="GO" id="GO:0042450">
    <property type="term" value="P:arginine biosynthetic process via ornithine"/>
    <property type="evidence" value="ECO:0007669"/>
    <property type="project" value="InterPro"/>
</dbReference>
<dbReference type="GO" id="GO:0006526">
    <property type="term" value="P:L-arginine biosynthetic process"/>
    <property type="evidence" value="ECO:0007669"/>
    <property type="project" value="UniProtKB-UniRule"/>
</dbReference>
<dbReference type="CDD" id="cd01359">
    <property type="entry name" value="Argininosuccinate_lyase"/>
    <property type="match status" value="1"/>
</dbReference>
<dbReference type="FunFam" id="1.10.275.10:FF:000002">
    <property type="entry name" value="Argininosuccinate lyase"/>
    <property type="match status" value="1"/>
</dbReference>
<dbReference type="FunFam" id="1.10.40.30:FF:000001">
    <property type="entry name" value="Argininosuccinate lyase"/>
    <property type="match status" value="1"/>
</dbReference>
<dbReference type="FunFam" id="1.20.200.10:FF:000015">
    <property type="entry name" value="argininosuccinate lyase isoform X2"/>
    <property type="match status" value="1"/>
</dbReference>
<dbReference type="Gene3D" id="1.10.40.30">
    <property type="entry name" value="Fumarase/aspartase (C-terminal domain)"/>
    <property type="match status" value="1"/>
</dbReference>
<dbReference type="Gene3D" id="1.20.200.10">
    <property type="entry name" value="Fumarase/aspartase (Central domain)"/>
    <property type="match status" value="1"/>
</dbReference>
<dbReference type="Gene3D" id="1.10.275.10">
    <property type="entry name" value="Fumarase/aspartase (N-terminal domain)"/>
    <property type="match status" value="1"/>
</dbReference>
<dbReference type="HAMAP" id="MF_00006">
    <property type="entry name" value="Arg_succ_lyase"/>
    <property type="match status" value="1"/>
</dbReference>
<dbReference type="InterPro" id="IPR029419">
    <property type="entry name" value="Arg_succ_lyase_C"/>
</dbReference>
<dbReference type="InterPro" id="IPR009049">
    <property type="entry name" value="Argininosuccinate_lyase"/>
</dbReference>
<dbReference type="InterPro" id="IPR024083">
    <property type="entry name" value="Fumarase/histidase_N"/>
</dbReference>
<dbReference type="InterPro" id="IPR020557">
    <property type="entry name" value="Fumarate_lyase_CS"/>
</dbReference>
<dbReference type="InterPro" id="IPR000362">
    <property type="entry name" value="Fumarate_lyase_fam"/>
</dbReference>
<dbReference type="InterPro" id="IPR022761">
    <property type="entry name" value="Fumarate_lyase_N"/>
</dbReference>
<dbReference type="InterPro" id="IPR008948">
    <property type="entry name" value="L-Aspartase-like"/>
</dbReference>
<dbReference type="NCBIfam" id="TIGR00838">
    <property type="entry name" value="argH"/>
    <property type="match status" value="1"/>
</dbReference>
<dbReference type="PANTHER" id="PTHR43814">
    <property type="entry name" value="ARGININOSUCCINATE LYASE"/>
    <property type="match status" value="1"/>
</dbReference>
<dbReference type="PANTHER" id="PTHR43814:SF1">
    <property type="entry name" value="ARGININOSUCCINATE LYASE"/>
    <property type="match status" value="1"/>
</dbReference>
<dbReference type="Pfam" id="PF14698">
    <property type="entry name" value="ASL_C2"/>
    <property type="match status" value="1"/>
</dbReference>
<dbReference type="Pfam" id="PF00206">
    <property type="entry name" value="Lyase_1"/>
    <property type="match status" value="1"/>
</dbReference>
<dbReference type="PRINTS" id="PR00145">
    <property type="entry name" value="ARGSUCLYASE"/>
</dbReference>
<dbReference type="PRINTS" id="PR00149">
    <property type="entry name" value="FUMRATELYASE"/>
</dbReference>
<dbReference type="SUPFAM" id="SSF48557">
    <property type="entry name" value="L-aspartase-like"/>
    <property type="match status" value="1"/>
</dbReference>
<dbReference type="PROSITE" id="PS00163">
    <property type="entry name" value="FUMARATE_LYASES"/>
    <property type="match status" value="1"/>
</dbReference>
<keyword id="KW-0028">Amino-acid biosynthesis</keyword>
<keyword id="KW-0055">Arginine biosynthesis</keyword>
<keyword id="KW-0963">Cytoplasm</keyword>
<keyword id="KW-0456">Lyase</keyword>
<sequence>MSNQHNQEKLSSARFSEATDAFVEEFTASIQFDKRMYRQDIQGSVAHAKMLHKVGILDKQELKDIIDGLEKVQSDIEAGKMNWSIKQEDIHMNIEAKLTELIGITGKKLHTGRSRNDQVATDIRLYLRDEIDAILPEMARLQHGILLLAEKEAETIMPGFTHLQTAQPVTFGHHMMAWFEMIKRDVERLEDCRKRVNTMPLGSAALAGTTYPIQREYTAELLQFDRISENSLDGVSDRDFAIEFTAFAATFLMHLSRFSEELVLWSSAQFNFIDLPDRFCTGSSIMPQKKNPDVPELVRGKTGRVYGHLMSLLTLMKSQPLAYNKDNQEDKEPLFDTVDTVKGSLRAFADMVPAIIVNREATYAAAKQGFSTATDLADYLVNKGLPFRDAHEVVGLAVAHGIQTGQDLSEMPLETLQAFHSSITDDVFEVLTLEGSVSARDHLGGTAPKQVKAAIKRAKDRL</sequence>
<accession>Q31JG7</accession>
<organism>
    <name type="scientific">Hydrogenovibrio crunogenus (strain DSM 25203 / XCL-2)</name>
    <name type="common">Thiomicrospira crunogena</name>
    <dbReference type="NCBI Taxonomy" id="317025"/>
    <lineage>
        <taxon>Bacteria</taxon>
        <taxon>Pseudomonadati</taxon>
        <taxon>Pseudomonadota</taxon>
        <taxon>Gammaproteobacteria</taxon>
        <taxon>Thiotrichales</taxon>
        <taxon>Piscirickettsiaceae</taxon>
        <taxon>Hydrogenovibrio</taxon>
    </lineage>
</organism>
<gene>
    <name evidence="1" type="primary">argH</name>
    <name type="ordered locus">Tcr_0110</name>
</gene>
<evidence type="ECO:0000255" key="1">
    <source>
        <dbReference type="HAMAP-Rule" id="MF_00006"/>
    </source>
</evidence>